<keyword id="KW-0378">Hydrolase</keyword>
<keyword id="KW-0441">Lipid A biosynthesis</keyword>
<keyword id="KW-0444">Lipid biosynthesis</keyword>
<keyword id="KW-0443">Lipid metabolism</keyword>
<keyword id="KW-0479">Metal-binding</keyword>
<keyword id="KW-0862">Zinc</keyword>
<protein>
    <recommendedName>
        <fullName evidence="1">UDP-3-O-acyl-N-acetylglucosamine deacetylase</fullName>
        <shortName evidence="1">UDP-3-O-acyl-GlcNAc deacetylase</shortName>
        <ecNumber evidence="1">3.5.1.108</ecNumber>
    </recommendedName>
    <alternativeName>
        <fullName evidence="1">UDP-3-O-[R-3-hydroxymyristoyl]-N-acetylglucosamine deacetylase</fullName>
    </alternativeName>
</protein>
<sequence>MLKQRTIKSIVKTVGIGLHSGRKVELTLRPAAPDTGIVFSRVDLPTPVDIPASALSIGDTRLASVLQKDGARVSTVEHLMSACAGLGIDNLYVDVTAEEIPIMDGSAASFVFLIQSAGIEEQNAAKKFIKVTKPVEIRDGDKFARLDPYFGFKLKFTIDFRHPAVDKTGQELEVDFANTSYVREIARARTFGFAHEVEMMRELGLARGGSMDNAIVLDEYRILNNDGLRYDDEFVKHKMLDAIGDLYVVGHPLLASYTAYKSGHGLNNALLRELLAHEDAYEIVTFDDPKAAPTGFGFDAQTAFA</sequence>
<name>LPXC_BURTA</name>
<reference key="1">
    <citation type="journal article" date="2005" name="BMC Genomics">
        <title>Bacterial genome adaptation to niches: divergence of the potential virulence genes in three Burkholderia species of different survival strategies.</title>
        <authorList>
            <person name="Kim H.S."/>
            <person name="Schell M.A."/>
            <person name="Yu Y."/>
            <person name="Ulrich R.L."/>
            <person name="Sarria S.H."/>
            <person name="Nierman W.C."/>
            <person name="DeShazer D."/>
        </authorList>
    </citation>
    <scope>NUCLEOTIDE SEQUENCE [LARGE SCALE GENOMIC DNA]</scope>
    <source>
        <strain>ATCC 700388 / DSM 13276 / CCUG 48851 / CIP 106301 / E264</strain>
    </source>
</reference>
<evidence type="ECO:0000255" key="1">
    <source>
        <dbReference type="HAMAP-Rule" id="MF_00388"/>
    </source>
</evidence>
<evidence type="ECO:0000305" key="2"/>
<dbReference type="EC" id="3.5.1.108" evidence="1"/>
<dbReference type="EMBL" id="CP000086">
    <property type="protein sequence ID" value="ABC38150.1"/>
    <property type="status" value="ALT_INIT"/>
    <property type="molecule type" value="Genomic_DNA"/>
</dbReference>
<dbReference type="RefSeq" id="WP_009888790.1">
    <property type="nucleotide sequence ID" value="NZ_CP008785.1"/>
</dbReference>
<dbReference type="SMR" id="Q2SZH6"/>
<dbReference type="GeneID" id="45120877"/>
<dbReference type="KEGG" id="bte:BTH_I1125"/>
<dbReference type="HOGENOM" id="CLU_046528_1_0_4"/>
<dbReference type="UniPathway" id="UPA00359">
    <property type="reaction ID" value="UER00478"/>
</dbReference>
<dbReference type="Proteomes" id="UP000001930">
    <property type="component" value="Chromosome I"/>
</dbReference>
<dbReference type="GO" id="GO:0016020">
    <property type="term" value="C:membrane"/>
    <property type="evidence" value="ECO:0007669"/>
    <property type="project" value="GOC"/>
</dbReference>
<dbReference type="GO" id="GO:0046872">
    <property type="term" value="F:metal ion binding"/>
    <property type="evidence" value="ECO:0007669"/>
    <property type="project" value="UniProtKB-KW"/>
</dbReference>
<dbReference type="GO" id="GO:0103117">
    <property type="term" value="F:UDP-3-O-acyl-N-acetylglucosamine deacetylase activity"/>
    <property type="evidence" value="ECO:0007669"/>
    <property type="project" value="UniProtKB-UniRule"/>
</dbReference>
<dbReference type="GO" id="GO:0009245">
    <property type="term" value="P:lipid A biosynthetic process"/>
    <property type="evidence" value="ECO:0007669"/>
    <property type="project" value="UniProtKB-UniRule"/>
</dbReference>
<dbReference type="Gene3D" id="3.30.230.20">
    <property type="entry name" value="lpxc deacetylase, domain 1"/>
    <property type="match status" value="1"/>
</dbReference>
<dbReference type="Gene3D" id="3.30.1700.10">
    <property type="entry name" value="lpxc deacetylase, domain 2"/>
    <property type="match status" value="1"/>
</dbReference>
<dbReference type="HAMAP" id="MF_00388">
    <property type="entry name" value="LpxC"/>
    <property type="match status" value="1"/>
</dbReference>
<dbReference type="InterPro" id="IPR020568">
    <property type="entry name" value="Ribosomal_Su5_D2-typ_SF"/>
</dbReference>
<dbReference type="InterPro" id="IPR004463">
    <property type="entry name" value="UDP-acyl_GlcNac_deAcase"/>
</dbReference>
<dbReference type="InterPro" id="IPR011334">
    <property type="entry name" value="UDP-acyl_GlcNac_deAcase_C"/>
</dbReference>
<dbReference type="InterPro" id="IPR015870">
    <property type="entry name" value="UDP-acyl_N-AcGlcN_deAcase_N"/>
</dbReference>
<dbReference type="NCBIfam" id="TIGR00325">
    <property type="entry name" value="lpxC"/>
    <property type="match status" value="1"/>
</dbReference>
<dbReference type="PANTHER" id="PTHR33694">
    <property type="entry name" value="UDP-3-O-ACYL-N-ACETYLGLUCOSAMINE DEACETYLASE 1, MITOCHONDRIAL-RELATED"/>
    <property type="match status" value="1"/>
</dbReference>
<dbReference type="PANTHER" id="PTHR33694:SF1">
    <property type="entry name" value="UDP-3-O-ACYL-N-ACETYLGLUCOSAMINE DEACETYLASE 1, MITOCHONDRIAL-RELATED"/>
    <property type="match status" value="1"/>
</dbReference>
<dbReference type="Pfam" id="PF03331">
    <property type="entry name" value="LpxC"/>
    <property type="match status" value="1"/>
</dbReference>
<dbReference type="SUPFAM" id="SSF54211">
    <property type="entry name" value="Ribosomal protein S5 domain 2-like"/>
    <property type="match status" value="2"/>
</dbReference>
<proteinExistence type="inferred from homology"/>
<feature type="chain" id="PRO_0000253655" description="UDP-3-O-acyl-N-acetylglucosamine deacetylase">
    <location>
        <begin position="1"/>
        <end position="305"/>
    </location>
</feature>
<feature type="active site" description="Proton donor" evidence="1">
    <location>
        <position position="264"/>
    </location>
</feature>
<feature type="binding site" evidence="1">
    <location>
        <position position="78"/>
    </location>
    <ligand>
        <name>Zn(2+)</name>
        <dbReference type="ChEBI" id="CHEBI:29105"/>
    </ligand>
</feature>
<feature type="binding site" evidence="1">
    <location>
        <position position="237"/>
    </location>
    <ligand>
        <name>Zn(2+)</name>
        <dbReference type="ChEBI" id="CHEBI:29105"/>
    </ligand>
</feature>
<feature type="binding site" evidence="1">
    <location>
        <position position="241"/>
    </location>
    <ligand>
        <name>Zn(2+)</name>
        <dbReference type="ChEBI" id="CHEBI:29105"/>
    </ligand>
</feature>
<organism>
    <name type="scientific">Burkholderia thailandensis (strain ATCC 700388 / DSM 13276 / CCUG 48851 / CIP 106301 / E264)</name>
    <dbReference type="NCBI Taxonomy" id="271848"/>
    <lineage>
        <taxon>Bacteria</taxon>
        <taxon>Pseudomonadati</taxon>
        <taxon>Pseudomonadota</taxon>
        <taxon>Betaproteobacteria</taxon>
        <taxon>Burkholderiales</taxon>
        <taxon>Burkholderiaceae</taxon>
        <taxon>Burkholderia</taxon>
        <taxon>pseudomallei group</taxon>
    </lineage>
</organism>
<comment type="function">
    <text evidence="1">Catalyzes the hydrolysis of UDP-3-O-myristoyl-N-acetylglucosamine to form UDP-3-O-myristoylglucosamine and acetate, the committed step in lipid A biosynthesis.</text>
</comment>
<comment type="catalytic activity">
    <reaction evidence="1">
        <text>a UDP-3-O-[(3R)-3-hydroxyacyl]-N-acetyl-alpha-D-glucosamine + H2O = a UDP-3-O-[(3R)-3-hydroxyacyl]-alpha-D-glucosamine + acetate</text>
        <dbReference type="Rhea" id="RHEA:67816"/>
        <dbReference type="ChEBI" id="CHEBI:15377"/>
        <dbReference type="ChEBI" id="CHEBI:30089"/>
        <dbReference type="ChEBI" id="CHEBI:137740"/>
        <dbReference type="ChEBI" id="CHEBI:173225"/>
        <dbReference type="EC" id="3.5.1.108"/>
    </reaction>
</comment>
<comment type="cofactor">
    <cofactor evidence="1">
        <name>Zn(2+)</name>
        <dbReference type="ChEBI" id="CHEBI:29105"/>
    </cofactor>
</comment>
<comment type="pathway">
    <text evidence="1">Glycolipid biosynthesis; lipid IV(A) biosynthesis; lipid IV(A) from (3R)-3-hydroxytetradecanoyl-[acyl-carrier-protein] and UDP-N-acetyl-alpha-D-glucosamine: step 2/6.</text>
</comment>
<comment type="similarity">
    <text evidence="1">Belongs to the LpxC family.</text>
</comment>
<comment type="sequence caution" evidence="2">
    <conflict type="erroneous initiation">
        <sequence resource="EMBL-CDS" id="ABC38150"/>
    </conflict>
</comment>
<accession>Q2SZH6</accession>
<gene>
    <name evidence="1" type="primary">lpxC</name>
    <name type="ordered locus">BTH_I1125</name>
</gene>